<evidence type="ECO:0000255" key="1">
    <source>
        <dbReference type="PROSITE-ProRule" id="PRU00280"/>
    </source>
</evidence>
<evidence type="ECO:0000269" key="2">
    <source>
    </source>
</evidence>
<evidence type="ECO:0000269" key="3">
    <source>
    </source>
</evidence>
<evidence type="ECO:0000269" key="4">
    <source ref="5"/>
</evidence>
<evidence type="ECO:0000305" key="5"/>
<evidence type="ECO:0007744" key="6">
    <source>
        <dbReference type="PDB" id="1ZK7"/>
    </source>
</evidence>
<evidence type="ECO:0007744" key="7">
    <source>
        <dbReference type="PDB" id="1ZX9"/>
    </source>
</evidence>
<evidence type="ECO:0007744" key="8">
    <source>
        <dbReference type="PDB" id="2KT2"/>
    </source>
</evidence>
<evidence type="ECO:0007744" key="9">
    <source>
        <dbReference type="PDB" id="2KT3"/>
    </source>
</evidence>
<evidence type="ECO:0007744" key="10">
    <source>
        <dbReference type="PDB" id="4K7Z"/>
    </source>
</evidence>
<evidence type="ECO:0007744" key="11">
    <source>
        <dbReference type="PDB" id="4K8D"/>
    </source>
</evidence>
<evidence type="ECO:0007829" key="12">
    <source>
        <dbReference type="PDB" id="1ZK7"/>
    </source>
</evidence>
<evidence type="ECO:0007829" key="13">
    <source>
        <dbReference type="PDB" id="1ZX9"/>
    </source>
</evidence>
<evidence type="ECO:0007829" key="14">
    <source>
        <dbReference type="PDB" id="2KT2"/>
    </source>
</evidence>
<evidence type="ECO:0007829" key="15">
    <source>
        <dbReference type="PDB" id="4K7Z"/>
    </source>
</evidence>
<accession>P00392</accession>
<keyword id="KW-0002">3D-structure</keyword>
<keyword id="KW-0903">Direct protein sequencing</keyword>
<keyword id="KW-1015">Disulfide bond</keyword>
<keyword id="KW-0274">FAD</keyword>
<keyword id="KW-0285">Flavoprotein</keyword>
<keyword id="KW-0475">Mercuric resistance</keyword>
<keyword id="KW-0476">Mercury</keyword>
<keyword id="KW-0479">Metal-binding</keyword>
<keyword id="KW-0521">NADP</keyword>
<keyword id="KW-0560">Oxidoreductase</keyword>
<keyword id="KW-0614">Plasmid</keyword>
<keyword id="KW-0676">Redox-active center</keyword>
<keyword id="KW-0814">Transposable element</keyword>
<proteinExistence type="evidence at protein level"/>
<name>MERA_PSEAI</name>
<gene>
    <name type="primary">merA</name>
</gene>
<comment type="function">
    <text evidence="2 3">Resistance to Hg(2+) in bacteria appears to be governed by a specialized system which includes mercuric reductase. MerA protein is responsible for volatilizing mercury as Hg(0). Plays a pivotal role in mercury resistance under thiol-depleted conditions and cell protection (PubMed:16114877). Protects cells under thiol-depleted conditions (PubMed:16114877).</text>
</comment>
<comment type="catalytic activity">
    <reaction evidence="3">
        <text>Hg + NADP(+) + H(+) = Hg(2+) + NADPH</text>
        <dbReference type="Rhea" id="RHEA:23856"/>
        <dbReference type="ChEBI" id="CHEBI:15378"/>
        <dbReference type="ChEBI" id="CHEBI:16170"/>
        <dbReference type="ChEBI" id="CHEBI:16793"/>
        <dbReference type="ChEBI" id="CHEBI:57783"/>
        <dbReference type="ChEBI" id="CHEBI:58349"/>
        <dbReference type="EC" id="1.16.1.1"/>
    </reaction>
</comment>
<comment type="cofactor">
    <cofactor evidence="3">
        <name>FAD</name>
        <dbReference type="ChEBI" id="CHEBI:57692"/>
    </cofactor>
    <text evidence="3">Binds 1 FAD per subunit.</text>
</comment>
<comment type="subunit">
    <text evidence="3">Homodimer.</text>
</comment>
<comment type="miscellaneous">
    <text evidence="3">The active site is a redox-active disulfide bond.</text>
</comment>
<comment type="similarity">
    <text evidence="5">Belongs to the class-I pyridine nucleotide-disulfide oxidoreductase family.</text>
</comment>
<geneLocation type="plasmid">
    <name>pVS1</name>
</geneLocation>
<dbReference type="EC" id="1.16.1.1" evidence="3"/>
<dbReference type="EMBL" id="Z00027">
    <property type="protein sequence ID" value="CAA77323.1"/>
    <property type="molecule type" value="Genomic_DNA"/>
</dbReference>
<dbReference type="PIR" id="A00406">
    <property type="entry name" value="RDPSHA"/>
</dbReference>
<dbReference type="RefSeq" id="WP_003156770.1">
    <property type="nucleotide sequence ID" value="NZ_WXZW01000069.1"/>
</dbReference>
<dbReference type="PDB" id="1ZK7">
    <property type="method" value="X-ray"/>
    <property type="resolution" value="1.60 A"/>
    <property type="chains" value="A=96-561"/>
</dbReference>
<dbReference type="PDB" id="1ZX9">
    <property type="method" value="X-ray"/>
    <property type="resolution" value="1.90 A"/>
    <property type="chains" value="A=96-561"/>
</dbReference>
<dbReference type="PDB" id="2KT2">
    <property type="method" value="NMR"/>
    <property type="chains" value="A=1-69"/>
</dbReference>
<dbReference type="PDB" id="2KT3">
    <property type="method" value="NMR"/>
    <property type="chains" value="A=1-69"/>
</dbReference>
<dbReference type="PDB" id="4K7Z">
    <property type="method" value="X-ray"/>
    <property type="resolution" value="1.50 A"/>
    <property type="chains" value="A=96-561"/>
</dbReference>
<dbReference type="PDB" id="4K8D">
    <property type="method" value="X-ray"/>
    <property type="resolution" value="1.86 A"/>
    <property type="chains" value="A=96-561"/>
</dbReference>
<dbReference type="PDBsum" id="1ZK7"/>
<dbReference type="PDBsum" id="1ZX9"/>
<dbReference type="PDBsum" id="2KT2"/>
<dbReference type="PDBsum" id="2KT3"/>
<dbReference type="PDBsum" id="4K7Z"/>
<dbReference type="PDBsum" id="4K8D"/>
<dbReference type="BMRB" id="P00392"/>
<dbReference type="SMR" id="P00392"/>
<dbReference type="GeneID" id="34794308"/>
<dbReference type="KEGG" id="ag:CAA77323"/>
<dbReference type="EvolutionaryTrace" id="P00392"/>
<dbReference type="GO" id="GO:0050660">
    <property type="term" value="F:flavin adenine dinucleotide binding"/>
    <property type="evidence" value="ECO:0007669"/>
    <property type="project" value="InterPro"/>
</dbReference>
<dbReference type="GO" id="GO:0016152">
    <property type="term" value="F:mercury (II) reductase (NADP+) activity"/>
    <property type="evidence" value="ECO:0007669"/>
    <property type="project" value="UniProtKB-EC"/>
</dbReference>
<dbReference type="GO" id="GO:0045340">
    <property type="term" value="F:mercury ion binding"/>
    <property type="evidence" value="ECO:0007669"/>
    <property type="project" value="InterPro"/>
</dbReference>
<dbReference type="GO" id="GO:0003955">
    <property type="term" value="F:NAD(P)H dehydrogenase (quinone) activity"/>
    <property type="evidence" value="ECO:0007669"/>
    <property type="project" value="TreeGrafter"/>
</dbReference>
<dbReference type="GO" id="GO:0050661">
    <property type="term" value="F:NADP binding"/>
    <property type="evidence" value="ECO:0007669"/>
    <property type="project" value="InterPro"/>
</dbReference>
<dbReference type="GO" id="GO:0016668">
    <property type="term" value="F:oxidoreductase activity, acting on a sulfur group of donors, NAD(P) as acceptor"/>
    <property type="evidence" value="ECO:0007669"/>
    <property type="project" value="InterPro"/>
</dbReference>
<dbReference type="GO" id="GO:0050787">
    <property type="term" value="P:detoxification of mercury ion"/>
    <property type="evidence" value="ECO:0007669"/>
    <property type="project" value="InterPro"/>
</dbReference>
<dbReference type="CDD" id="cd00371">
    <property type="entry name" value="HMA"/>
    <property type="match status" value="1"/>
</dbReference>
<dbReference type="FunFam" id="3.30.70.100:FF:000001">
    <property type="entry name" value="ATPase copper transporting beta"/>
    <property type="match status" value="1"/>
</dbReference>
<dbReference type="FunFam" id="3.30.390.30:FF:000001">
    <property type="entry name" value="Dihydrolipoyl dehydrogenase"/>
    <property type="match status" value="1"/>
</dbReference>
<dbReference type="Gene3D" id="3.30.390.30">
    <property type="match status" value="1"/>
</dbReference>
<dbReference type="Gene3D" id="3.30.70.100">
    <property type="match status" value="1"/>
</dbReference>
<dbReference type="Gene3D" id="3.50.50.60">
    <property type="entry name" value="FAD/NAD(P)-binding domain"/>
    <property type="match status" value="2"/>
</dbReference>
<dbReference type="InterPro" id="IPR036188">
    <property type="entry name" value="FAD/NAD-bd_sf"/>
</dbReference>
<dbReference type="InterPro" id="IPR023753">
    <property type="entry name" value="FAD/NAD-binding_dom"/>
</dbReference>
<dbReference type="InterPro" id="IPR016156">
    <property type="entry name" value="FAD/NAD-linked_Rdtase_dimer_sf"/>
</dbReference>
<dbReference type="InterPro" id="IPR017969">
    <property type="entry name" value="Heavy-metal-associated_CS"/>
</dbReference>
<dbReference type="InterPro" id="IPR006121">
    <property type="entry name" value="HMA_dom"/>
</dbReference>
<dbReference type="InterPro" id="IPR036163">
    <property type="entry name" value="HMA_dom_sf"/>
</dbReference>
<dbReference type="InterPro" id="IPR021179">
    <property type="entry name" value="Mercury_reductase_MerA"/>
</dbReference>
<dbReference type="InterPro" id="IPR001100">
    <property type="entry name" value="Pyr_nuc-diS_OxRdtase"/>
</dbReference>
<dbReference type="InterPro" id="IPR004099">
    <property type="entry name" value="Pyr_nucl-diS_OxRdtase_dimer"/>
</dbReference>
<dbReference type="InterPro" id="IPR012999">
    <property type="entry name" value="Pyr_OxRdtase_I_AS"/>
</dbReference>
<dbReference type="NCBIfam" id="TIGR02053">
    <property type="entry name" value="MerA"/>
    <property type="match status" value="1"/>
</dbReference>
<dbReference type="NCBIfam" id="NF010311">
    <property type="entry name" value="PRK13748.1"/>
    <property type="match status" value="1"/>
</dbReference>
<dbReference type="PANTHER" id="PTHR43014">
    <property type="entry name" value="MERCURIC REDUCTASE"/>
    <property type="match status" value="1"/>
</dbReference>
<dbReference type="PANTHER" id="PTHR43014:SF2">
    <property type="entry name" value="MERCURIC REDUCTASE"/>
    <property type="match status" value="1"/>
</dbReference>
<dbReference type="Pfam" id="PF00403">
    <property type="entry name" value="HMA"/>
    <property type="match status" value="1"/>
</dbReference>
<dbReference type="Pfam" id="PF07992">
    <property type="entry name" value="Pyr_redox_2"/>
    <property type="match status" value="1"/>
</dbReference>
<dbReference type="Pfam" id="PF02852">
    <property type="entry name" value="Pyr_redox_dim"/>
    <property type="match status" value="1"/>
</dbReference>
<dbReference type="PIRSF" id="PIRSF000350">
    <property type="entry name" value="Mercury_reductase_MerA"/>
    <property type="match status" value="1"/>
</dbReference>
<dbReference type="PRINTS" id="PR00945">
    <property type="entry name" value="HGRDTASE"/>
</dbReference>
<dbReference type="SUPFAM" id="SSF51905">
    <property type="entry name" value="FAD/NAD(P)-binding domain"/>
    <property type="match status" value="1"/>
</dbReference>
<dbReference type="SUPFAM" id="SSF55424">
    <property type="entry name" value="FAD/NAD-linked reductases, dimerisation (C-terminal) domain"/>
    <property type="match status" value="1"/>
</dbReference>
<dbReference type="SUPFAM" id="SSF55008">
    <property type="entry name" value="HMA, heavy metal-associated domain"/>
    <property type="match status" value="1"/>
</dbReference>
<dbReference type="PROSITE" id="PS01047">
    <property type="entry name" value="HMA_1"/>
    <property type="match status" value="1"/>
</dbReference>
<dbReference type="PROSITE" id="PS50846">
    <property type="entry name" value="HMA_2"/>
    <property type="match status" value="1"/>
</dbReference>
<dbReference type="PROSITE" id="PS00076">
    <property type="entry name" value="PYRIDINE_REDOX_1"/>
    <property type="match status" value="1"/>
</dbReference>
<protein>
    <recommendedName>
        <fullName>Mercuric reductase</fullName>
        <ecNumber evidence="3">1.16.1.1</ecNumber>
    </recommendedName>
    <alternativeName>
        <fullName>Hg(II) reductase</fullName>
    </alternativeName>
</protein>
<sequence>MTHLKITGMTCDSCAAHVKEALEKVPGVQSALVSYPKGTAQLAIVPGTSPDALTAAVAGLGYKATLADAPLADNRVGLLDKVRGWMAAAEKHSGNEPPVQVAVIGSGGAAMAAALKAVEQGAQVTLIERGTIGGTCVNVGCVPSKIMIRAAHIAHLRRESPFDGGIAATVPTIDRSKLLAQQQARVDELRHAKYEGILGGNPAITVVHGEARFKDDQSLTVRLNEGGERVVMFDRCLVATGASPAVPPIPGLKESPYWTSTEALASDTIPERLAVIGSSVVALELAQAFARLGSKVTVLARNTLFFREDPAIGEAVTAAFRAEGIEVLEHTQASQVAHMDGEFVLTTTHGELRADKLLVATGRTPNTRSLALDAAGVTVNAQGAIVIDQGMRTSNPNIYAAGDCTDQPQFVYVAAAAGTRAAINMTGGDAALDLTAMPAVVFTDPQVATVGYSEAEAHHDGIETDSRTLTLDNVPRALANFDTRGFIKLVIEEGSHRLIGVQAVAPEAGELIQTAALAIRNRMTVQELADQLFPYLTMVEGLKLAAQTFNKDVKQLSCCAG</sequence>
<feature type="initiator methionine" description="Removed" evidence="3">
    <location>
        <position position="1"/>
    </location>
</feature>
<feature type="chain" id="PRO_0000067997" description="Mercuric reductase">
    <location>
        <begin position="2"/>
        <end position="561"/>
    </location>
</feature>
<feature type="domain" description="HMA" evidence="1">
    <location>
        <begin position="2"/>
        <end position="65"/>
    </location>
</feature>
<feature type="binding site" evidence="1">
    <location>
        <position position="11"/>
    </location>
    <ligand>
        <name>a metal cation</name>
        <dbReference type="ChEBI" id="CHEBI:25213"/>
    </ligand>
</feature>
<feature type="binding site" evidence="1">
    <location>
        <position position="14"/>
    </location>
    <ligand>
        <name>a metal cation</name>
        <dbReference type="ChEBI" id="CHEBI:25213"/>
    </ligand>
</feature>
<feature type="binding site" evidence="2 6">
    <location>
        <position position="110"/>
    </location>
    <ligand>
        <name>FAD</name>
        <dbReference type="ChEBI" id="CHEBI:57692"/>
    </ligand>
</feature>
<feature type="binding site" evidence="2 6">
    <location>
        <position position="130"/>
    </location>
    <ligand>
        <name>FAD</name>
        <dbReference type="ChEBI" id="CHEBI:57692"/>
    </ligand>
</feature>
<feature type="binding site" evidence="2 6">
    <location>
        <position position="135"/>
    </location>
    <ligand>
        <name>FAD</name>
        <dbReference type="ChEBI" id="CHEBI:57692"/>
    </ligand>
</feature>
<feature type="binding site" evidence="2 6">
    <location>
        <position position="145"/>
    </location>
    <ligand>
        <name>FAD</name>
        <dbReference type="ChEBI" id="CHEBI:57692"/>
    </ligand>
</feature>
<feature type="binding site" evidence="2 6">
    <location>
        <position position="211"/>
    </location>
    <ligand>
        <name>FAD</name>
        <dbReference type="ChEBI" id="CHEBI:57692"/>
    </ligand>
</feature>
<feature type="binding site" evidence="2 6">
    <location>
        <position position="403"/>
    </location>
    <ligand>
        <name>FAD</name>
        <dbReference type="ChEBI" id="CHEBI:57692"/>
    </ligand>
</feature>
<feature type="binding site" evidence="2 6">
    <location>
        <position position="411"/>
    </location>
    <ligand>
        <name>FAD</name>
        <dbReference type="ChEBI" id="CHEBI:57692"/>
    </ligand>
</feature>
<feature type="binding site" evidence="4 10">
    <location>
        <position position="558"/>
    </location>
    <ligand>
        <name>Hg(2+)</name>
        <dbReference type="ChEBI" id="CHEBI:16793"/>
    </ligand>
</feature>
<feature type="binding site" evidence="4 10">
    <location>
        <position position="559"/>
    </location>
    <ligand>
        <name>Hg(2+)</name>
        <dbReference type="ChEBI" id="CHEBI:16793"/>
    </ligand>
</feature>
<feature type="disulfide bond" description="Redox-active" evidence="3">
    <location>
        <begin position="136"/>
        <end position="141"/>
    </location>
</feature>
<feature type="strand" evidence="14">
    <location>
        <begin position="4"/>
        <end position="9"/>
    </location>
</feature>
<feature type="helix" evidence="14">
    <location>
        <begin position="13"/>
        <end position="24"/>
    </location>
</feature>
<feature type="strand" evidence="14">
    <location>
        <begin position="28"/>
        <end position="34"/>
    </location>
</feature>
<feature type="turn" evidence="14">
    <location>
        <begin position="35"/>
        <end position="38"/>
    </location>
</feature>
<feature type="strand" evidence="14">
    <location>
        <begin position="39"/>
        <end position="44"/>
    </location>
</feature>
<feature type="helix" evidence="14">
    <location>
        <begin position="50"/>
        <end position="58"/>
    </location>
</feature>
<feature type="turn" evidence="14">
    <location>
        <begin position="59"/>
        <end position="61"/>
    </location>
</feature>
<feature type="strand" evidence="14">
    <location>
        <begin position="62"/>
        <end position="65"/>
    </location>
</feature>
<feature type="strand" evidence="15">
    <location>
        <begin position="100"/>
        <end position="104"/>
    </location>
</feature>
<feature type="helix" evidence="15">
    <location>
        <begin position="108"/>
        <end position="119"/>
    </location>
</feature>
<feature type="strand" evidence="15">
    <location>
        <begin position="123"/>
        <end position="131"/>
    </location>
</feature>
<feature type="helix" evidence="15">
    <location>
        <begin position="134"/>
        <end position="139"/>
    </location>
</feature>
<feature type="helix" evidence="15">
    <location>
        <begin position="141"/>
        <end position="158"/>
    </location>
</feature>
<feature type="turn" evidence="15">
    <location>
        <begin position="161"/>
        <end position="165"/>
    </location>
</feature>
<feature type="helix" evidence="15">
    <location>
        <begin position="175"/>
        <end position="193"/>
    </location>
</feature>
<feature type="helix" evidence="15">
    <location>
        <begin position="195"/>
        <end position="199"/>
    </location>
</feature>
<feature type="strand" evidence="15">
    <location>
        <begin position="204"/>
        <end position="215"/>
    </location>
</feature>
<feature type="strand" evidence="15">
    <location>
        <begin position="218"/>
        <end position="223"/>
    </location>
</feature>
<feature type="strand" evidence="15">
    <location>
        <begin position="226"/>
        <end position="232"/>
    </location>
</feature>
<feature type="strand" evidence="15">
    <location>
        <begin position="234"/>
        <end position="238"/>
    </location>
</feature>
<feature type="strand" evidence="15">
    <location>
        <begin position="242"/>
        <end position="244"/>
    </location>
</feature>
<feature type="turn" evidence="15">
    <location>
        <begin position="250"/>
        <end position="254"/>
    </location>
</feature>
<feature type="helix" evidence="15">
    <location>
        <begin position="260"/>
        <end position="265"/>
    </location>
</feature>
<feature type="strand" evidence="15">
    <location>
        <begin position="271"/>
        <end position="276"/>
    </location>
</feature>
<feature type="helix" evidence="15">
    <location>
        <begin position="280"/>
        <end position="291"/>
    </location>
</feature>
<feature type="strand" evidence="15">
    <location>
        <begin position="295"/>
        <end position="299"/>
    </location>
</feature>
<feature type="strand" evidence="15">
    <location>
        <begin position="301"/>
        <end position="303"/>
    </location>
</feature>
<feature type="turn" evidence="15">
    <location>
        <begin position="304"/>
        <end position="307"/>
    </location>
</feature>
<feature type="helix" evidence="15">
    <location>
        <begin position="310"/>
        <end position="322"/>
    </location>
</feature>
<feature type="strand" evidence="15">
    <location>
        <begin position="326"/>
        <end position="328"/>
    </location>
</feature>
<feature type="strand" evidence="15">
    <location>
        <begin position="333"/>
        <end position="339"/>
    </location>
</feature>
<feature type="strand" evidence="15">
    <location>
        <begin position="342"/>
        <end position="347"/>
    </location>
</feature>
<feature type="strand" evidence="15">
    <location>
        <begin position="350"/>
        <end position="359"/>
    </location>
</feature>
<feature type="strand" evidence="15">
    <location>
        <begin position="363"/>
        <end position="366"/>
    </location>
</feature>
<feature type="helix" evidence="13">
    <location>
        <begin position="368"/>
        <end position="370"/>
    </location>
</feature>
<feature type="helix" evidence="15">
    <location>
        <begin position="372"/>
        <end position="375"/>
    </location>
</feature>
<feature type="strand" evidence="15">
    <location>
        <begin position="398"/>
        <end position="400"/>
    </location>
</feature>
<feature type="turn" evidence="15">
    <location>
        <begin position="403"/>
        <end position="406"/>
    </location>
</feature>
<feature type="helix" evidence="15">
    <location>
        <begin position="411"/>
        <end position="425"/>
    </location>
</feature>
<feature type="strand" evidence="15">
    <location>
        <begin position="438"/>
        <end position="441"/>
    </location>
</feature>
<feature type="strand" evidence="15">
    <location>
        <begin position="443"/>
        <end position="451"/>
    </location>
</feature>
<feature type="helix" evidence="15">
    <location>
        <begin position="454"/>
        <end position="459"/>
    </location>
</feature>
<feature type="strand" evidence="15">
    <location>
        <begin position="464"/>
        <end position="470"/>
    </location>
</feature>
<feature type="helix" evidence="15">
    <location>
        <begin position="471"/>
        <end position="473"/>
    </location>
</feature>
<feature type="helix" evidence="15">
    <location>
        <begin position="475"/>
        <end position="479"/>
    </location>
</feature>
<feature type="strand" evidence="15">
    <location>
        <begin position="486"/>
        <end position="492"/>
    </location>
</feature>
<feature type="turn" evidence="15">
    <location>
        <begin position="493"/>
        <end position="495"/>
    </location>
</feature>
<feature type="strand" evidence="15">
    <location>
        <begin position="497"/>
        <end position="505"/>
    </location>
</feature>
<feature type="helix" evidence="15">
    <location>
        <begin position="508"/>
        <end position="520"/>
    </location>
</feature>
<feature type="helix" evidence="15">
    <location>
        <begin position="525"/>
        <end position="529"/>
    </location>
</feature>
<feature type="helix" evidence="15">
    <location>
        <begin position="540"/>
        <end position="547"/>
    </location>
</feature>
<feature type="turn" evidence="15">
    <location>
        <begin position="548"/>
        <end position="550"/>
    </location>
</feature>
<feature type="helix" evidence="15">
    <location>
        <begin position="553"/>
        <end position="555"/>
    </location>
</feature>
<feature type="turn" evidence="12">
    <location>
        <begin position="556"/>
        <end position="558"/>
    </location>
</feature>
<organism>
    <name type="scientific">Pseudomonas aeruginosa</name>
    <dbReference type="NCBI Taxonomy" id="287"/>
    <lineage>
        <taxon>Bacteria</taxon>
        <taxon>Pseudomonadati</taxon>
        <taxon>Pseudomonadota</taxon>
        <taxon>Gammaproteobacteria</taxon>
        <taxon>Pseudomonadales</taxon>
        <taxon>Pseudomonadaceae</taxon>
        <taxon>Pseudomonas</taxon>
    </lineage>
</organism>
<reference key="1">
    <citation type="journal article" date="1983" name="Biochemistry">
        <title>Nucleotide sequence of a gene from the Pseudomonas transposon Tn501 encoding mercuric reductase.</title>
        <authorList>
            <person name="Brown N.L."/>
            <person name="Ford S.J."/>
            <person name="Pridmore R.D."/>
            <person name="Fritzinger D.C."/>
        </authorList>
    </citation>
    <scope>NUCLEOTIDE SEQUENCE [GENOMIC DNA]</scope>
    <source>
        <transposon>Tn501</transposon>
    </source>
</reference>
<reference key="2">
    <citation type="journal article" date="1983" name="Biochemistry">
        <title>Mercuric reductase: homology to glutathione reductase and lipoamide dehydrogenase. Iodoacetamide alkylation and sequence of the active site peptide.</title>
        <authorList>
            <person name="Fox B.S."/>
            <person name="Walsh C.T."/>
        </authorList>
    </citation>
    <scope>PROTEIN SEQUENCE OF 2-12 AND 130-143</scope>
    <scope>FUNCTION</scope>
    <scope>CATALYTIC ACTIVITY</scope>
    <scope>COFACTOR</scope>
    <scope>SUBUNIT</scope>
    <scope>DISULFIDE BOND</scope>
</reference>
<reference evidence="6 7" key="3">
    <citation type="journal article" date="2005" name="Biochemistry">
        <title>NmerA, the metal binding domain of mercuric ion reductase, removes Hg2+ from proteins, delivers it to the catalytic core, and protects cells under glutathione-depleted conditions.</title>
        <authorList>
            <person name="Ledwidge R."/>
            <person name="Patel B."/>
            <person name="Dong A."/>
            <person name="Fiedler D."/>
            <person name="Falkowski M."/>
            <person name="Zelikova J."/>
            <person name="Summers A.O."/>
            <person name="Pai E.F."/>
            <person name="Miller S.M."/>
        </authorList>
    </citation>
    <scope>X-RAY CRYSTALLOGRAPHY (1.6 ANGSTROMS) OF 96-561 IN COMPLEX WITH FAD</scope>
    <scope>FUNCTION</scope>
</reference>
<reference evidence="8 9" key="4">
    <citation type="journal article" date="2010" name="Biochemistry">
        <title>NmerA of Tn501 mercuric ion reductase: structural modulation of the pKa values of the metal binding cysteine thiols.</title>
        <authorList>
            <person name="Ledwidge R."/>
            <person name="Hong B."/>
            <person name="Doetsch V."/>
            <person name="Miller S.M."/>
        </authorList>
    </citation>
    <scope>STRUCTURE BY NMR OF 1-69</scope>
</reference>
<reference evidence="10 11" key="5">
    <citation type="submission" date="2013-04" db="PDB data bank">
        <authorList>
            <person name="Dong A."/>
            <person name="Falkowaski M."/>
            <person name="Malone M."/>
            <person name="Miller S.M."/>
            <person name="Pai E.F."/>
        </authorList>
    </citation>
    <scope>X-RAY CRYSTALLOGRAPHY (1.5 ANGSTROMS) OF 96-561 IN COMPLEX WITH NADP AND MERCURY</scope>
</reference>